<proteinExistence type="evidence at protein level"/>
<gene>
    <name evidence="14" type="primary">PDE1A</name>
</gene>
<feature type="chain" id="PRO_0000198785" description="Dual specificity calcium/calmodulin-dependent 3',5'-cyclic nucleotide phosphodiesterase 1A">
    <location>
        <begin position="1"/>
        <end position="535"/>
    </location>
</feature>
<feature type="domain" description="PDEase" evidence="5">
    <location>
        <begin position="142"/>
        <end position="522"/>
    </location>
</feature>
<feature type="region of interest" description="Calmodulin-binding" evidence="2">
    <location>
        <begin position="24"/>
        <end position="44"/>
    </location>
</feature>
<feature type="region of interest" description="Calmodulin-binding" evidence="2">
    <location>
        <begin position="114"/>
        <end position="137"/>
    </location>
</feature>
<feature type="active site" description="Proton donor" evidence="1">
    <location>
        <position position="219"/>
    </location>
</feature>
<feature type="binding site" evidence="3">
    <location>
        <position position="223"/>
    </location>
    <ligand>
        <name>Zn(2+)</name>
        <dbReference type="ChEBI" id="CHEBI:29105"/>
    </ligand>
</feature>
<feature type="binding site" evidence="3">
    <location>
        <position position="259"/>
    </location>
    <ligand>
        <name>Zn(2+)</name>
        <dbReference type="ChEBI" id="CHEBI:29105"/>
    </ligand>
</feature>
<feature type="binding site" evidence="3">
    <location>
        <position position="260"/>
    </location>
    <ligand>
        <name>Mg(2+)</name>
        <dbReference type="ChEBI" id="CHEBI:18420"/>
    </ligand>
</feature>
<feature type="binding site" evidence="3">
    <location>
        <position position="260"/>
    </location>
    <ligand>
        <name>Zn(2+)</name>
        <dbReference type="ChEBI" id="CHEBI:29105"/>
    </ligand>
</feature>
<feature type="binding site" evidence="3">
    <location>
        <position position="366"/>
    </location>
    <ligand>
        <name>Zn(2+)</name>
        <dbReference type="ChEBI" id="CHEBI:29105"/>
    </ligand>
</feature>
<feature type="splice variant" id="VSP_004548" description="In isoform 3, isoform 8 and isoform 9." evidence="9">
    <original>MGSSATEIEELENTTFKYLTGEQTEKMWQRLKGILRCLVKQLERGDVNVVDLKKNIEYAASVLEAVYIDETR</original>
    <variation>MGKKINKLFCFNFLVQCFRGKSKPSKCQIRKKVKNHIE</variation>
    <location>
        <begin position="1"/>
        <end position="72"/>
    </location>
</feature>
<feature type="splice variant" id="VSP_004547" description="In isoform 2, isoform 6 and isoform 7." evidence="8 10">
    <original>MGSSATEIEELENTTFKYLTGEQTEKMWQRLKGI</original>
    <variation>MDDHVTIRKKHLQRPIFR</variation>
    <location>
        <begin position="1"/>
        <end position="34"/>
    </location>
</feature>
<feature type="splice variant" id="VSP_004549" description="In isoform 4, isoform 6 and isoform 8." evidence="9">
    <original>EARTSSQKCEFIHQ</original>
    <variation>GESDLHKNSEDLVNAEEKHDETHS</variation>
    <location>
        <begin position="522"/>
        <end position="535"/>
    </location>
</feature>
<feature type="splice variant" id="VSP_004550" description="In isoform 5, isoform 7 and isoform 9." evidence="12">
    <original>EARTSSQKCEFIHQ</original>
    <variation>GSVVYEALLPSLSVFTSPLRVWITSSRFLLL</variation>
    <location>
        <begin position="522"/>
        <end position="535"/>
    </location>
</feature>
<reference key="1">
    <citation type="journal article" date="1996" name="J. Biol. Chem.">
        <title>Isolation and characterization of cDNAs corresponding to two human calcium, calmodulin-regulated, 3',5'-cyclic nucleotide phosphodiesterases.</title>
        <authorList>
            <person name="Loughney K."/>
            <person name="Martins T.J."/>
            <person name="Harris E.A.S."/>
            <person name="Sadhu K."/>
            <person name="Hicks J.B."/>
            <person name="Sonnenburg W.K."/>
            <person name="Beavo J.A."/>
            <person name="Ferguson K."/>
        </authorList>
    </citation>
    <scope>NUCLEOTIDE SEQUENCE [MRNA] (ISOFORM 1)</scope>
    <scope>FUNCTION</scope>
    <scope>CATALYTIC ACTIVITY</scope>
</reference>
<reference key="2">
    <citation type="journal article" date="2001" name="Biochim. Biophys. Acta">
        <title>Human Ca2+/calmodulin-dependent phosphodiesterase PDE1A: novel splice variants, their specific expression, genomic organization, and chromosomal localization.</title>
        <authorList>
            <person name="Michibata H."/>
            <person name="Yanaka N."/>
            <person name="Kanoh Y."/>
            <person name="Okumura K."/>
            <person name="Omori K."/>
        </authorList>
    </citation>
    <scope>NUCLEOTIDE SEQUENCE (ISOFORMS 1; 2; 3; 4; 5; 6; 7; 8 AND 9)</scope>
    <source>
        <tissue>Heart</tissue>
    </source>
</reference>
<reference key="3">
    <citation type="journal article" date="2002" name="Cell. Signal.">
        <title>Isolation and differential tissue distribution of two human cDNAs encoding PDE1 splice variants.</title>
        <authorList>
            <person name="Fidock M.D."/>
            <person name="Miller M."/>
            <person name="Lanfear J."/>
        </authorList>
    </citation>
    <scope>NUCLEOTIDE SEQUENCE [MRNA] (ISOFORM 2)</scope>
    <source>
        <tissue>Brain</tissue>
    </source>
</reference>
<reference key="4">
    <citation type="journal article" date="2007" name="BMC Genomics">
        <title>The full-ORF clone resource of the German cDNA consortium.</title>
        <authorList>
            <person name="Bechtel S."/>
            <person name="Rosenfelder H."/>
            <person name="Duda A."/>
            <person name="Schmidt C.P."/>
            <person name="Ernst U."/>
            <person name="Wellenreuther R."/>
            <person name="Mehrle A."/>
            <person name="Schuster C."/>
            <person name="Bahr A."/>
            <person name="Bloecker H."/>
            <person name="Heubner D."/>
            <person name="Hoerlein A."/>
            <person name="Michel G."/>
            <person name="Wedler H."/>
            <person name="Koehrer K."/>
            <person name="Ottenwaelder B."/>
            <person name="Poustka A."/>
            <person name="Wiemann S."/>
            <person name="Schupp I."/>
        </authorList>
    </citation>
    <scope>NUCLEOTIDE SEQUENCE [LARGE SCALE MRNA] (ISOFORM 2)</scope>
    <source>
        <tissue>Uterus</tissue>
    </source>
</reference>
<reference key="5">
    <citation type="submission" date="2005-09" db="EMBL/GenBank/DDBJ databases">
        <authorList>
            <person name="Mural R.J."/>
            <person name="Istrail S."/>
            <person name="Sutton G.G."/>
            <person name="Florea L."/>
            <person name="Halpern A.L."/>
            <person name="Mobarry C.M."/>
            <person name="Lippert R."/>
            <person name="Walenz B."/>
            <person name="Shatkay H."/>
            <person name="Dew I."/>
            <person name="Miller J.R."/>
            <person name="Flanigan M.J."/>
            <person name="Edwards N.J."/>
            <person name="Bolanos R."/>
            <person name="Fasulo D."/>
            <person name="Halldorsson B.V."/>
            <person name="Hannenhalli S."/>
            <person name="Turner R."/>
            <person name="Yooseph S."/>
            <person name="Lu F."/>
            <person name="Nusskern D.R."/>
            <person name="Shue B.C."/>
            <person name="Zheng X.H."/>
            <person name="Zhong F."/>
            <person name="Delcher A.L."/>
            <person name="Huson D.H."/>
            <person name="Kravitz S.A."/>
            <person name="Mouchard L."/>
            <person name="Reinert K."/>
            <person name="Remington K.A."/>
            <person name="Clark A.G."/>
            <person name="Waterman M.S."/>
            <person name="Eichler E.E."/>
            <person name="Adams M.D."/>
            <person name="Hunkapiller M.W."/>
            <person name="Myers E.W."/>
            <person name="Venter J.C."/>
        </authorList>
    </citation>
    <scope>NUCLEOTIDE SEQUENCE [LARGE SCALE GENOMIC DNA]</scope>
</reference>
<reference key="6">
    <citation type="journal article" date="2004" name="Genome Res.">
        <title>The status, quality, and expansion of the NIH full-length cDNA project: the Mammalian Gene Collection (MGC).</title>
        <authorList>
            <consortium name="The MGC Project Team"/>
        </authorList>
    </citation>
    <scope>NUCLEOTIDE SEQUENCE [LARGE SCALE MRNA] (ISOFORMS 3 AND 4)</scope>
    <source>
        <tissue>Brain</tissue>
    </source>
</reference>
<reference key="7">
    <citation type="journal article" date="2006" name="Mol. Cell. Proteomics">
        <title>Transgenic mouse proteomics identifies new 14-3-3-associated proteins involved in cytoskeletal rearrangements and cell signaling.</title>
        <authorList>
            <person name="Angrand P.O."/>
            <person name="Segura I."/>
            <person name="Voelkel P."/>
            <person name="Ghidelli S."/>
            <person name="Terry R."/>
            <person name="Brajenovic M."/>
            <person name="Vintersten K."/>
            <person name="Klein R."/>
            <person name="Superti-Furga G."/>
            <person name="Drewes G."/>
            <person name="Kuster B."/>
            <person name="Bouwmeester T."/>
            <person name="Acker-Palmer A."/>
        </authorList>
    </citation>
    <scope>INTERACTION WITH YWHAZ</scope>
</reference>
<keyword id="KW-0025">Alternative splicing</keyword>
<keyword id="KW-0112">Calmodulin-binding</keyword>
<keyword id="KW-0114">cAMP</keyword>
<keyword id="KW-0140">cGMP</keyword>
<keyword id="KW-0378">Hydrolase</keyword>
<keyword id="KW-0460">Magnesium</keyword>
<keyword id="KW-0479">Metal-binding</keyword>
<keyword id="KW-1267">Proteomics identification</keyword>
<keyword id="KW-1185">Reference proteome</keyword>
<keyword id="KW-0862">Zinc</keyword>
<protein>
    <recommendedName>
        <fullName evidence="13">Dual specificity calcium/calmodulin-dependent 3',5'-cyclic nucleotide phosphodiesterase 1A</fullName>
        <shortName>Cam-PDE 1A</shortName>
        <ecNumber evidence="7">3.1.4.17</ecNumber>
    </recommendedName>
    <alternativeName>
        <fullName evidence="11">61 kDa Cam-PDE</fullName>
    </alternativeName>
    <alternativeName>
        <fullName evidence="11">hCam-1</fullName>
    </alternativeName>
</protein>
<organism>
    <name type="scientific">Homo sapiens</name>
    <name type="common">Human</name>
    <dbReference type="NCBI Taxonomy" id="9606"/>
    <lineage>
        <taxon>Eukaryota</taxon>
        <taxon>Metazoa</taxon>
        <taxon>Chordata</taxon>
        <taxon>Craniata</taxon>
        <taxon>Vertebrata</taxon>
        <taxon>Euteleostomi</taxon>
        <taxon>Mammalia</taxon>
        <taxon>Eutheria</taxon>
        <taxon>Euarchontoglires</taxon>
        <taxon>Primates</taxon>
        <taxon>Haplorrhini</taxon>
        <taxon>Catarrhini</taxon>
        <taxon>Hominidae</taxon>
        <taxon>Homo</taxon>
    </lineage>
</organism>
<accession>P54750</accession>
<accession>D3DPG5</accession>
<accession>Q86VZ0</accession>
<accession>Q9C0K8</accession>
<accession>Q9C0K9</accession>
<accession>Q9C0L0</accession>
<accession>Q9C0L1</accession>
<accession>Q9C0L2</accession>
<accession>Q9C0L3</accession>
<accession>Q9C0L4</accession>
<accession>Q9UFX3</accession>
<name>PDE1A_HUMAN</name>
<evidence type="ECO:0000250" key="1">
    <source>
        <dbReference type="UniProtKB" id="O76083"/>
    </source>
</evidence>
<evidence type="ECO:0000250" key="2">
    <source>
        <dbReference type="UniProtKB" id="P14100"/>
    </source>
</evidence>
<evidence type="ECO:0000250" key="3">
    <source>
        <dbReference type="UniProtKB" id="Q01064"/>
    </source>
</evidence>
<evidence type="ECO:0000250" key="4">
    <source>
        <dbReference type="UniProtKB" id="Q61481"/>
    </source>
</evidence>
<evidence type="ECO:0000255" key="5">
    <source>
        <dbReference type="PROSITE-ProRule" id="PRU01192"/>
    </source>
</evidence>
<evidence type="ECO:0000269" key="6">
    <source>
    </source>
</evidence>
<evidence type="ECO:0000269" key="7">
    <source>
    </source>
</evidence>
<evidence type="ECO:0000303" key="8">
    <source>
    </source>
</evidence>
<evidence type="ECO:0000303" key="9">
    <source>
    </source>
</evidence>
<evidence type="ECO:0000303" key="10">
    <source>
    </source>
</evidence>
<evidence type="ECO:0000303" key="11">
    <source>
    </source>
</evidence>
<evidence type="ECO:0000305" key="12"/>
<evidence type="ECO:0000305" key="13">
    <source>
    </source>
</evidence>
<evidence type="ECO:0000312" key="14">
    <source>
        <dbReference type="HGNC" id="HGNC:8774"/>
    </source>
</evidence>
<sequence>MGSSATEIEELENTTFKYLTGEQTEKMWQRLKGILRCLVKQLERGDVNVVDLKKNIEYAASVLEAVYIDETRRLLDTEDELSDIQTDSVPSEVRDWLASTFTRKMGMTKKKPEEKPKFRSIVHAVQAGIFVERMYRKTYHMVGLAYPAAVIVTLKDVDKWSFDVFALNEASGEHSLKFMIYELFTRYDLINRFKIPVSCLITFAEALEVGYSKYKNPYHNLIHAADVTQTVHYIMLHTGIMHWLTELEILAMVFAAAIHDYEHTGTTNNFHIQTRSDVAILYNDRSVLENHHVSAAYRLMQEEEMNILINLSKDDWRDLRNLVIEMVLSTDMSGHFQQIKNIRNSLQQPEGIDRAKTMSLILHAADISHPAKSWKLHYRWTMALMEEFFLQGDKEAELGLPFSPLCDRKSTMVAQSQIGFIDFIVEPTFSLLTDSTEKIVIPLIEEASKAETSSYVASSSTTIVGLHIADALRRSNTKGSMSDGSYSPDYSLAAVDLKSFKNNLVDIIQQNKERWKELAAQEARTSSQKCEFIHQ</sequence>
<comment type="function">
    <text evidence="7">Calcium/calmodulin-dependent cyclic nucleotide phosphodiesterase with a dual specificity for the second messengers cGMP and cAMP, which are key regulators of many important physiological processes. Has a higher efficiency with cGMP compared to cAMP.</text>
</comment>
<comment type="catalytic activity">
    <reaction evidence="7">
        <text>a nucleoside 3',5'-cyclic phosphate + H2O = a nucleoside 5'-phosphate + H(+)</text>
        <dbReference type="Rhea" id="RHEA:14653"/>
        <dbReference type="ChEBI" id="CHEBI:15377"/>
        <dbReference type="ChEBI" id="CHEBI:15378"/>
        <dbReference type="ChEBI" id="CHEBI:57867"/>
        <dbReference type="ChEBI" id="CHEBI:58464"/>
        <dbReference type="EC" id="3.1.4.17"/>
    </reaction>
    <physiologicalReaction direction="left-to-right" evidence="13">
        <dbReference type="Rhea" id="RHEA:14654"/>
    </physiologicalReaction>
</comment>
<comment type="catalytic activity">
    <reaction evidence="7">
        <text>3',5'-cyclic GMP + H2O = GMP + H(+)</text>
        <dbReference type="Rhea" id="RHEA:16957"/>
        <dbReference type="ChEBI" id="CHEBI:15377"/>
        <dbReference type="ChEBI" id="CHEBI:15378"/>
        <dbReference type="ChEBI" id="CHEBI:57746"/>
        <dbReference type="ChEBI" id="CHEBI:58115"/>
    </reaction>
    <physiologicalReaction direction="left-to-right" evidence="13">
        <dbReference type="Rhea" id="RHEA:16958"/>
    </physiologicalReaction>
</comment>
<comment type="catalytic activity">
    <reaction evidence="7">
        <text>3',5'-cyclic AMP + H2O = AMP + H(+)</text>
        <dbReference type="Rhea" id="RHEA:25277"/>
        <dbReference type="ChEBI" id="CHEBI:15377"/>
        <dbReference type="ChEBI" id="CHEBI:15378"/>
        <dbReference type="ChEBI" id="CHEBI:58165"/>
        <dbReference type="ChEBI" id="CHEBI:456215"/>
    </reaction>
    <physiologicalReaction direction="left-to-right" evidence="13">
        <dbReference type="Rhea" id="RHEA:25278"/>
    </physiologicalReaction>
</comment>
<comment type="cofactor">
    <cofactor evidence="3">
        <name>Zn(2+)</name>
        <dbReference type="ChEBI" id="CHEBI:29105"/>
    </cofactor>
    <text evidence="3">Binds 2 divalent metal cations per subunit. Site 1 may preferentially bind zinc ions.</text>
</comment>
<comment type="cofactor">
    <cofactor evidence="3">
        <name>Mg(2+)</name>
        <dbReference type="ChEBI" id="CHEBI:18420"/>
    </cofactor>
    <text evidence="3">Binds 2 divalent metal cations per subunit. Site 2 has a preference for magnesium ions.</text>
</comment>
<comment type="activity regulation">
    <text evidence="4">Type I PDE are activated by the binding of calmodulin in the presence of Ca(2+).</text>
</comment>
<comment type="subunit">
    <text evidence="2 6">Homodimer (By similarity). Interacts with YWHAZ (PubMed:16959763).</text>
</comment>
<comment type="interaction">
    <interactant intactId="EBI-25952361">
        <id>P54750-4</id>
    </interactant>
    <interactant intactId="EBI-466029">
        <id>P42858</id>
        <label>HTT</label>
    </interactant>
    <organismsDiffer>false</organismsDiffer>
    <experiments>3</experiments>
</comment>
<comment type="alternative products">
    <event type="alternative splicing"/>
    <isoform>
        <id>P54750-1</id>
        <name>1</name>
        <name>PDE1A3</name>
        <name>PDE1A6</name>
        <sequence type="displayed"/>
    </isoform>
    <isoform>
        <id>P54750-2</id>
        <name>2</name>
        <name>PDE1A4</name>
        <name>PDE1A5</name>
        <sequence type="described" ref="VSP_004547"/>
    </isoform>
    <isoform>
        <id>P54750-3</id>
        <name>3</name>
        <name>PDE1A10</name>
        <sequence type="described" ref="VSP_004548"/>
    </isoform>
    <isoform>
        <id>P54750-4</id>
        <name>4</name>
        <name>PDE1A5</name>
        <sequence type="described" ref="VSP_004549"/>
    </isoform>
    <isoform>
        <id>P54750-5</id>
        <name>5</name>
        <name>PDE1A9</name>
        <sequence type="described" ref="VSP_004550"/>
    </isoform>
    <isoform>
        <id>P54750-6</id>
        <name>6</name>
        <name>PDE1A1</name>
        <sequence type="described" ref="VSP_004547 VSP_004549"/>
    </isoform>
    <isoform>
        <id>P54750-7</id>
        <name>7</name>
        <name>PDE1A8</name>
        <sequence type="described" ref="VSP_004547 VSP_004550"/>
    </isoform>
    <isoform>
        <id>P54750-8</id>
        <name>8</name>
        <name>PDE1A11</name>
        <sequence type="described" ref="VSP_004548 VSP_004549"/>
    </isoform>
    <isoform>
        <id>P54750-9</id>
        <name>9</name>
        <name>PDE1A12</name>
        <sequence type="described" ref="VSP_004548 VSP_004550"/>
    </isoform>
</comment>
<comment type="tissue specificity">
    <text>Several tissues, including brain, kidney, testes and heart.</text>
</comment>
<comment type="similarity">
    <text evidence="12">Belongs to the cyclic nucleotide phosphodiesterase family. PDE1 subfamily.</text>
</comment>
<dbReference type="EC" id="3.1.4.17" evidence="7"/>
<dbReference type="EMBL" id="U40370">
    <property type="protein sequence ID" value="AAC50436.1"/>
    <property type="molecule type" value="mRNA"/>
</dbReference>
<dbReference type="EMBL" id="AB038224">
    <property type="protein sequence ID" value="BAB20049.1"/>
    <property type="molecule type" value="Genomic_DNA"/>
</dbReference>
<dbReference type="EMBL" id="AB038224">
    <property type="protein sequence ID" value="BAB20050.1"/>
    <property type="molecule type" value="Genomic_DNA"/>
</dbReference>
<dbReference type="EMBL" id="AB038224">
    <property type="protein sequence ID" value="BAB20051.1"/>
    <property type="molecule type" value="Genomic_DNA"/>
</dbReference>
<dbReference type="EMBL" id="AB038224">
    <property type="protein sequence ID" value="BAB20052.1"/>
    <property type="molecule type" value="Genomic_DNA"/>
</dbReference>
<dbReference type="EMBL" id="AB038224">
    <property type="protein sequence ID" value="BAB20053.1"/>
    <property type="molecule type" value="Genomic_DNA"/>
</dbReference>
<dbReference type="EMBL" id="AB038224">
    <property type="protein sequence ID" value="BAB20054.1"/>
    <property type="molecule type" value="Genomic_DNA"/>
</dbReference>
<dbReference type="EMBL" id="AB038224">
    <property type="protein sequence ID" value="BAB20055.1"/>
    <property type="molecule type" value="Genomic_DNA"/>
</dbReference>
<dbReference type="EMBL" id="AB038224">
    <property type="protein sequence ID" value="BAB20056.1"/>
    <property type="molecule type" value="Genomic_DNA"/>
</dbReference>
<dbReference type="EMBL" id="AB038224">
    <property type="protein sequence ID" value="BAB20057.1"/>
    <property type="molecule type" value="Genomic_DNA"/>
</dbReference>
<dbReference type="EMBL" id="AJ401610">
    <property type="protein sequence ID" value="CAC82208.1"/>
    <property type="molecule type" value="mRNA"/>
</dbReference>
<dbReference type="EMBL" id="AL110263">
    <property type="protein sequence ID" value="CAB53703.1"/>
    <property type="molecule type" value="mRNA"/>
</dbReference>
<dbReference type="EMBL" id="CH471058">
    <property type="protein sequence ID" value="EAX10966.1"/>
    <property type="molecule type" value="Genomic_DNA"/>
</dbReference>
<dbReference type="EMBL" id="CH471058">
    <property type="protein sequence ID" value="EAX10974.1"/>
    <property type="molecule type" value="Genomic_DNA"/>
</dbReference>
<dbReference type="EMBL" id="BC022480">
    <property type="protein sequence ID" value="AAH22480.1"/>
    <property type="molecule type" value="mRNA"/>
</dbReference>
<dbReference type="CCDS" id="CCDS2285.1">
    <molecule id="P54750-4"/>
</dbReference>
<dbReference type="CCDS" id="CCDS33344.1">
    <molecule id="P54750-1"/>
</dbReference>
<dbReference type="CCDS" id="CCDS58741.1">
    <molecule id="P54750-2"/>
</dbReference>
<dbReference type="CCDS" id="CCDS74612.1">
    <molecule id="P54750-3"/>
</dbReference>
<dbReference type="CCDS" id="CCDS86900.1">
    <molecule id="P54750-6"/>
</dbReference>
<dbReference type="PIR" id="T14783">
    <property type="entry name" value="T14783"/>
</dbReference>
<dbReference type="RefSeq" id="NP_001003683.1">
    <molecule id="P54750-1"/>
    <property type="nucleotide sequence ID" value="NM_001003683.3"/>
</dbReference>
<dbReference type="RefSeq" id="NP_001245242.1">
    <molecule id="P54750-2"/>
    <property type="nucleotide sequence ID" value="NM_001258313.3"/>
</dbReference>
<dbReference type="RefSeq" id="NP_001245243.1">
    <molecule id="P54750-3"/>
    <property type="nucleotide sequence ID" value="NM_001258314.3"/>
</dbReference>
<dbReference type="RefSeq" id="NP_001350800.1">
    <molecule id="P54750-6"/>
    <property type="nucleotide sequence ID" value="NM_001363871.4"/>
</dbReference>
<dbReference type="RefSeq" id="NP_001382187.1">
    <molecule id="P54750-4"/>
    <property type="nucleotide sequence ID" value="NM_001395258.2"/>
</dbReference>
<dbReference type="RefSeq" id="NP_001382188.1">
    <molecule id="P54750-4"/>
    <property type="nucleotide sequence ID" value="NM_001395259.2"/>
</dbReference>
<dbReference type="RefSeq" id="NP_001382189.1">
    <molecule id="P54750-4"/>
    <property type="nucleotide sequence ID" value="NM_001395260.2"/>
</dbReference>
<dbReference type="RefSeq" id="NP_001382190.1">
    <molecule id="P54750-4"/>
    <property type="nucleotide sequence ID" value="NM_001395261.2"/>
</dbReference>
<dbReference type="RefSeq" id="NP_001382191.1">
    <molecule id="P54750-1"/>
    <property type="nucleotide sequence ID" value="NM_001395262.1"/>
</dbReference>
<dbReference type="RefSeq" id="NP_001382192.1">
    <molecule id="P54750-1"/>
    <property type="nucleotide sequence ID" value="NM_001395263.1"/>
</dbReference>
<dbReference type="RefSeq" id="NP_005010.2">
    <molecule id="P54750-4"/>
    <property type="nucleotide sequence ID" value="NM_005019.4"/>
</dbReference>
<dbReference type="RefSeq" id="XP_016859784.1">
    <property type="nucleotide sequence ID" value="XM_017004295.1"/>
</dbReference>
<dbReference type="RefSeq" id="XP_016859785.1">
    <property type="nucleotide sequence ID" value="XM_017004296.1"/>
</dbReference>
<dbReference type="RefSeq" id="XP_016859786.1">
    <property type="nucleotide sequence ID" value="XM_017004297.1"/>
</dbReference>
<dbReference type="RefSeq" id="XP_016859787.1">
    <property type="nucleotide sequence ID" value="XM_017004298.1"/>
</dbReference>
<dbReference type="RefSeq" id="XP_016859788.1">
    <property type="nucleotide sequence ID" value="XM_017004299.1"/>
</dbReference>
<dbReference type="RefSeq" id="XP_016859789.1">
    <property type="nucleotide sequence ID" value="XM_017004300.1"/>
</dbReference>
<dbReference type="RefSeq" id="XP_016859790.1">
    <property type="nucleotide sequence ID" value="XM_017004301.1"/>
</dbReference>
<dbReference type="RefSeq" id="XP_016859791.1">
    <property type="nucleotide sequence ID" value="XM_017004302.1"/>
</dbReference>
<dbReference type="SMR" id="P54750"/>
<dbReference type="BioGRID" id="111162">
    <property type="interactions" value="6"/>
</dbReference>
<dbReference type="CORUM" id="P54750"/>
<dbReference type="FunCoup" id="P54750">
    <property type="interactions" value="938"/>
</dbReference>
<dbReference type="IntAct" id="P54750">
    <property type="interactions" value="3"/>
</dbReference>
<dbReference type="STRING" id="9606.ENSP00000410309"/>
<dbReference type="BindingDB" id="P54750"/>
<dbReference type="ChEMBL" id="CHEMBL3421"/>
<dbReference type="DrugBank" id="DB01244">
    <property type="generic name" value="Bepridil"/>
</dbReference>
<dbReference type="DrugBank" id="DB00201">
    <property type="generic name" value="Caffeine"/>
</dbReference>
<dbReference type="DrugBank" id="DB01023">
    <property type="generic name" value="Felodipine"/>
</dbReference>
<dbReference type="DrugBank" id="DB00622">
    <property type="generic name" value="Nicardipine"/>
</dbReference>
<dbReference type="DrugBank" id="DB09283">
    <property type="generic name" value="Trapidil"/>
</dbReference>
<dbReference type="DrugCentral" id="P54750"/>
<dbReference type="GuidetoPHARMACOLOGY" id="1294"/>
<dbReference type="GlyGen" id="P54750">
    <property type="glycosylation" value="1 site, 1 O-linked glycan (1 site)"/>
</dbReference>
<dbReference type="iPTMnet" id="P54750"/>
<dbReference type="PhosphoSitePlus" id="P54750"/>
<dbReference type="SwissPalm" id="P54750"/>
<dbReference type="BioMuta" id="PDE1A"/>
<dbReference type="DMDM" id="1705942"/>
<dbReference type="jPOST" id="P54750"/>
<dbReference type="MassIVE" id="P54750"/>
<dbReference type="PaxDb" id="9606-ENSP00000410309"/>
<dbReference type="PeptideAtlas" id="P54750"/>
<dbReference type="ProteomicsDB" id="56702">
    <molecule id="P54750-1"/>
</dbReference>
<dbReference type="ProteomicsDB" id="56703">
    <molecule id="P54750-2"/>
</dbReference>
<dbReference type="ProteomicsDB" id="56704">
    <molecule id="P54750-3"/>
</dbReference>
<dbReference type="ProteomicsDB" id="56705">
    <molecule id="P54750-4"/>
</dbReference>
<dbReference type="ProteomicsDB" id="56706">
    <molecule id="P54750-5"/>
</dbReference>
<dbReference type="ProteomicsDB" id="56707">
    <molecule id="P54750-6"/>
</dbReference>
<dbReference type="ProteomicsDB" id="56708">
    <molecule id="P54750-7"/>
</dbReference>
<dbReference type="ProteomicsDB" id="56709">
    <molecule id="P54750-8"/>
</dbReference>
<dbReference type="ProteomicsDB" id="56710">
    <molecule id="P54750-9"/>
</dbReference>
<dbReference type="Antibodypedia" id="19750">
    <property type="antibodies" value="281 antibodies from 34 providers"/>
</dbReference>
<dbReference type="DNASU" id="5136"/>
<dbReference type="Ensembl" id="ENST00000351439.10">
    <molecule id="P54750-2"/>
    <property type="protein sequence ID" value="ENSP00000309269.9"/>
    <property type="gene ID" value="ENSG00000115252.19"/>
</dbReference>
<dbReference type="Ensembl" id="ENST00000358139.6">
    <molecule id="P54750-3"/>
    <property type="protein sequence ID" value="ENSP00000350858.3"/>
    <property type="gene ID" value="ENSG00000115252.19"/>
</dbReference>
<dbReference type="Ensembl" id="ENST00000409365.6">
    <molecule id="P54750-6"/>
    <property type="protein sequence ID" value="ENSP00000386767.1"/>
    <property type="gene ID" value="ENSG00000115252.19"/>
</dbReference>
<dbReference type="Ensembl" id="ENST00000410103.2">
    <molecule id="P54750-1"/>
    <property type="protein sequence ID" value="ENSP00000387037.1"/>
    <property type="gene ID" value="ENSG00000115252.19"/>
</dbReference>
<dbReference type="Ensembl" id="ENST00000435564.6">
    <molecule id="P54750-4"/>
    <property type="protein sequence ID" value="ENSP00000410309.1"/>
    <property type="gene ID" value="ENSG00000115252.19"/>
</dbReference>
<dbReference type="Ensembl" id="ENST00000482782.6">
    <molecule id="P54750-4"/>
    <property type="protein sequence ID" value="ENSP00000512257.1"/>
    <property type="gene ID" value="ENSG00000115252.19"/>
</dbReference>
<dbReference type="Ensembl" id="ENST00000495511.2">
    <molecule id="P54750-1"/>
    <property type="protein sequence ID" value="ENSP00000512258.1"/>
    <property type="gene ID" value="ENSG00000115252.19"/>
</dbReference>
<dbReference type="GeneID" id="5136"/>
<dbReference type="KEGG" id="hsa:5136"/>
<dbReference type="MANE-Select" id="ENST00000409365.6">
    <molecule id="P54750-6"/>
    <property type="protein sequence ID" value="ENSP00000386767.1"/>
    <property type="RefSeq nucleotide sequence ID" value="NM_001363871.4"/>
    <property type="RefSeq protein sequence ID" value="NP_001350800.1"/>
</dbReference>
<dbReference type="UCSC" id="uc002uoq.3">
    <molecule id="P54750-1"/>
    <property type="organism name" value="human"/>
</dbReference>
<dbReference type="AGR" id="HGNC:8774"/>
<dbReference type="CTD" id="5136"/>
<dbReference type="DisGeNET" id="5136"/>
<dbReference type="GeneCards" id="PDE1A"/>
<dbReference type="HGNC" id="HGNC:8774">
    <property type="gene designation" value="PDE1A"/>
</dbReference>
<dbReference type="HPA" id="ENSG00000115252">
    <property type="expression patterns" value="Tissue enhanced (kidney, thyroid gland)"/>
</dbReference>
<dbReference type="MIM" id="171890">
    <property type="type" value="gene"/>
</dbReference>
<dbReference type="neXtProt" id="NX_P54750"/>
<dbReference type="OpenTargets" id="ENSG00000115252"/>
<dbReference type="PharmGKB" id="PA33122"/>
<dbReference type="VEuPathDB" id="HostDB:ENSG00000115252"/>
<dbReference type="eggNOG" id="KOG3688">
    <property type="taxonomic scope" value="Eukaryota"/>
</dbReference>
<dbReference type="GeneTree" id="ENSGT00940000157043"/>
<dbReference type="HOGENOM" id="CLU_005940_1_3_1"/>
<dbReference type="InParanoid" id="P54750"/>
<dbReference type="OMA" id="MSHPPAE"/>
<dbReference type="OrthoDB" id="189220at2759"/>
<dbReference type="PAN-GO" id="P54750">
    <property type="GO annotations" value="3 GO annotations based on evolutionary models"/>
</dbReference>
<dbReference type="PhylomeDB" id="P54750"/>
<dbReference type="TreeFam" id="TF314638"/>
<dbReference type="BRENDA" id="3.1.4.17">
    <property type="organism ID" value="2681"/>
</dbReference>
<dbReference type="PathwayCommons" id="P54750"/>
<dbReference type="Reactome" id="R-HSA-111957">
    <property type="pathway name" value="Cam-PDE 1 activation"/>
</dbReference>
<dbReference type="Reactome" id="R-HSA-418457">
    <property type="pathway name" value="cGMP effects"/>
</dbReference>
<dbReference type="Reactome" id="R-HSA-418555">
    <property type="pathway name" value="G alpha (s) signalling events"/>
</dbReference>
<dbReference type="SignaLink" id="P54750"/>
<dbReference type="SIGNOR" id="P54750"/>
<dbReference type="BioGRID-ORCS" id="5136">
    <property type="hits" value="13 hits in 1151 CRISPR screens"/>
</dbReference>
<dbReference type="CD-CODE" id="FB4E32DD">
    <property type="entry name" value="Presynaptic clusters and postsynaptic densities"/>
</dbReference>
<dbReference type="ChiTaRS" id="PDE1A">
    <property type="organism name" value="human"/>
</dbReference>
<dbReference type="GeneWiki" id="PDE1A"/>
<dbReference type="GenomeRNAi" id="5136"/>
<dbReference type="Pharos" id="P54750">
    <property type="development level" value="Tclin"/>
</dbReference>
<dbReference type="PRO" id="PR:P54750"/>
<dbReference type="Proteomes" id="UP000005640">
    <property type="component" value="Chromosome 2"/>
</dbReference>
<dbReference type="RNAct" id="P54750">
    <property type="molecule type" value="protein"/>
</dbReference>
<dbReference type="Bgee" id="ENSG00000115252">
    <property type="expression patterns" value="Expressed in sperm and 169 other cell types or tissues"/>
</dbReference>
<dbReference type="GO" id="GO:0005829">
    <property type="term" value="C:cytosol"/>
    <property type="evidence" value="ECO:0000304"/>
    <property type="project" value="Reactome"/>
</dbReference>
<dbReference type="GO" id="GO:0043025">
    <property type="term" value="C:neuronal cell body"/>
    <property type="evidence" value="ECO:0000318"/>
    <property type="project" value="GO_Central"/>
</dbReference>
<dbReference type="GO" id="GO:0005516">
    <property type="term" value="F:calmodulin binding"/>
    <property type="evidence" value="ECO:0007669"/>
    <property type="project" value="UniProtKB-KW"/>
</dbReference>
<dbReference type="GO" id="GO:0048101">
    <property type="term" value="F:calmodulin-activated 3',5'-cyclic-GMP phosphodiesterase activity"/>
    <property type="evidence" value="ECO:0000250"/>
    <property type="project" value="UniProtKB"/>
</dbReference>
<dbReference type="GO" id="GO:0004117">
    <property type="term" value="F:calmodulin-activated dual specificity 3',5'-cyclic-GMP, 3',5'-cyclic-AMP phosphodiesterase activity"/>
    <property type="evidence" value="ECO:0000314"/>
    <property type="project" value="UniProtKB"/>
</dbReference>
<dbReference type="GO" id="GO:0046872">
    <property type="term" value="F:metal ion binding"/>
    <property type="evidence" value="ECO:0007669"/>
    <property type="project" value="UniProtKB-KW"/>
</dbReference>
<dbReference type="GO" id="GO:0019933">
    <property type="term" value="P:cAMP-mediated signaling"/>
    <property type="evidence" value="ECO:0000318"/>
    <property type="project" value="GO_Central"/>
</dbReference>
<dbReference type="GO" id="GO:0046069">
    <property type="term" value="P:cGMP catabolic process"/>
    <property type="evidence" value="ECO:0007669"/>
    <property type="project" value="Ensembl"/>
</dbReference>
<dbReference type="GO" id="GO:0034391">
    <property type="term" value="P:regulation of smooth muscle cell apoptotic process"/>
    <property type="evidence" value="ECO:0007669"/>
    <property type="project" value="Ensembl"/>
</dbReference>
<dbReference type="GO" id="GO:0048660">
    <property type="term" value="P:regulation of smooth muscle cell proliferation"/>
    <property type="evidence" value="ECO:0007669"/>
    <property type="project" value="Ensembl"/>
</dbReference>
<dbReference type="CDD" id="cd00077">
    <property type="entry name" value="HDc"/>
    <property type="match status" value="1"/>
</dbReference>
<dbReference type="FunFam" id="1.10.1300.10:FF:000011">
    <property type="entry name" value="Phosphodiesterase"/>
    <property type="match status" value="1"/>
</dbReference>
<dbReference type="Gene3D" id="1.10.1300.10">
    <property type="entry name" value="3'5'-cyclic nucleotide phosphodiesterase, catalytic domain"/>
    <property type="match status" value="1"/>
</dbReference>
<dbReference type="InterPro" id="IPR003607">
    <property type="entry name" value="HD/PDEase_dom"/>
</dbReference>
<dbReference type="InterPro" id="IPR023088">
    <property type="entry name" value="PDEase"/>
</dbReference>
<dbReference type="InterPro" id="IPR002073">
    <property type="entry name" value="PDEase_catalytic_dom"/>
</dbReference>
<dbReference type="InterPro" id="IPR036971">
    <property type="entry name" value="PDEase_catalytic_dom_sf"/>
</dbReference>
<dbReference type="InterPro" id="IPR023174">
    <property type="entry name" value="PDEase_CS"/>
</dbReference>
<dbReference type="InterPro" id="IPR013706">
    <property type="entry name" value="PDEase_N"/>
</dbReference>
<dbReference type="PANTHER" id="PTHR11347">
    <property type="entry name" value="CYCLIC NUCLEOTIDE PHOSPHODIESTERASE"/>
    <property type="match status" value="1"/>
</dbReference>
<dbReference type="Pfam" id="PF00233">
    <property type="entry name" value="PDEase_I"/>
    <property type="match status" value="1"/>
</dbReference>
<dbReference type="Pfam" id="PF08499">
    <property type="entry name" value="PDEase_I_N"/>
    <property type="match status" value="1"/>
</dbReference>
<dbReference type="PRINTS" id="PR00387">
    <property type="entry name" value="PDIESTERASE1"/>
</dbReference>
<dbReference type="SMART" id="SM00471">
    <property type="entry name" value="HDc"/>
    <property type="match status" value="1"/>
</dbReference>
<dbReference type="SUPFAM" id="SSF109604">
    <property type="entry name" value="HD-domain/PDEase-like"/>
    <property type="match status" value="1"/>
</dbReference>
<dbReference type="PROSITE" id="PS00126">
    <property type="entry name" value="PDEASE_I_1"/>
    <property type="match status" value="1"/>
</dbReference>
<dbReference type="PROSITE" id="PS51845">
    <property type="entry name" value="PDEASE_I_2"/>
    <property type="match status" value="1"/>
</dbReference>